<reference key="1">
    <citation type="journal article" date="2004" name="Proc. Natl. Acad. Sci. U.S.A.">
        <title>The diploid genome sequence of Candida albicans.</title>
        <authorList>
            <person name="Jones T."/>
            <person name="Federspiel N.A."/>
            <person name="Chibana H."/>
            <person name="Dungan J."/>
            <person name="Kalman S."/>
            <person name="Magee B.B."/>
            <person name="Newport G."/>
            <person name="Thorstenson Y.R."/>
            <person name="Agabian N."/>
            <person name="Magee P.T."/>
            <person name="Davis R.W."/>
            <person name="Scherer S."/>
        </authorList>
    </citation>
    <scope>NUCLEOTIDE SEQUENCE [LARGE SCALE GENOMIC DNA]</scope>
    <source>
        <strain>SC5314 / ATCC MYA-2876</strain>
    </source>
</reference>
<reference key="2">
    <citation type="journal article" date="2007" name="Genome Biol.">
        <title>Assembly of the Candida albicans genome into sixteen supercontigs aligned on the eight chromosomes.</title>
        <authorList>
            <person name="van het Hoog M."/>
            <person name="Rast T.J."/>
            <person name="Martchenko M."/>
            <person name="Grindle S."/>
            <person name="Dignard D."/>
            <person name="Hogues H."/>
            <person name="Cuomo C."/>
            <person name="Berriman M."/>
            <person name="Scherer S."/>
            <person name="Magee B.B."/>
            <person name="Whiteway M."/>
            <person name="Chibana H."/>
            <person name="Nantel A."/>
            <person name="Magee P.T."/>
        </authorList>
    </citation>
    <scope>GENOME REANNOTATION</scope>
    <source>
        <strain>SC5314 / ATCC MYA-2876</strain>
    </source>
</reference>
<reference key="3">
    <citation type="journal article" date="2013" name="Genome Biol.">
        <title>Assembly of a phased diploid Candida albicans genome facilitates allele-specific measurements and provides a simple model for repeat and indel structure.</title>
        <authorList>
            <person name="Muzzey D."/>
            <person name="Schwartz K."/>
            <person name="Weissman J.S."/>
            <person name="Sherlock G."/>
        </authorList>
    </citation>
    <scope>NUCLEOTIDE SEQUENCE [LARGE SCALE GENOMIC DNA]</scope>
    <scope>GENOME REANNOTATION</scope>
    <source>
        <strain>SC5314 / ATCC MYA-2876</strain>
    </source>
</reference>
<feature type="chain" id="PRO_0000212503" description="SWR1-complex protein 5">
    <location>
        <begin position="1"/>
        <end position="338"/>
    </location>
</feature>
<feature type="domain" description="BCNT-C" evidence="2">
    <location>
        <begin position="251"/>
        <end position="331"/>
    </location>
</feature>
<feature type="region of interest" description="Disordered" evidence="3">
    <location>
        <begin position="1"/>
        <end position="102"/>
    </location>
</feature>
<feature type="region of interest" description="Disordered" evidence="3">
    <location>
        <begin position="153"/>
        <end position="174"/>
    </location>
</feature>
<feature type="compositionally biased region" description="Basic and acidic residues" evidence="3">
    <location>
        <begin position="1"/>
        <end position="27"/>
    </location>
</feature>
<feature type="compositionally biased region" description="Acidic residues" evidence="3">
    <location>
        <begin position="34"/>
        <end position="46"/>
    </location>
</feature>
<feature type="compositionally biased region" description="Basic and acidic residues" evidence="3">
    <location>
        <begin position="68"/>
        <end position="77"/>
    </location>
</feature>
<feature type="compositionally biased region" description="Polar residues" evidence="3">
    <location>
        <begin position="83"/>
        <end position="93"/>
    </location>
</feature>
<keyword id="KW-0010">Activator</keyword>
<keyword id="KW-0156">Chromatin regulator</keyword>
<keyword id="KW-0539">Nucleus</keyword>
<keyword id="KW-1185">Reference proteome</keyword>
<keyword id="KW-0804">Transcription</keyword>
<keyword id="KW-0805">Transcription regulation</keyword>
<sequence length="338" mass="38842">MSKQNIDKSTEHSAGENALSEKNHTIESNKNNIDSEEDDEEDEDYDPEKKNEAENEGGVSSDEEEDNDQYKDGKTSKIPDYSTIESSTSQVKTRSQRLHEKLSNQSRFIGNFEVDSKTGLVKDQSNIDVNSIFENLKNGSPSIDNSEELNIDSEKTANSQQQQKQQSNIEENELQGPKQIKIQINYTFAGKLITETKYVDENSQEAKAYLNSTSNISSSNSNEDIPYRRSQVKVIRTDPVTNETKELRIKLKRPSLIDRFLSINGNSKKMKLSTLEKSRLDWASFVDKRNINEELKIHNKAGYLDKQDFINRMNSKRDDLYLQAKEKEKIRKQQLLQK</sequence>
<accession>Q5A8H7</accession>
<accession>A0A1D8PQA7</accession>
<proteinExistence type="inferred from homology"/>
<gene>
    <name type="primary">SWC5</name>
    <name type="ordered locus">CAALFM_C603950CA</name>
    <name type="ORF">CaO19.13194</name>
    <name type="ORF">CaO19.5772</name>
</gene>
<comment type="function">
    <text evidence="1">Component of the SWR1 complex which mediates the ATP-dependent exchange of histone H2A for the H2A variant HZT1 leading to transcriptional regulation of selected genes by chromatin remodeling. Involved in chromosome stability (By similarity).</text>
</comment>
<comment type="subunit">
    <text evidence="1">Component of the SWR1 chromatin remodeling complex.</text>
</comment>
<comment type="subcellular location">
    <subcellularLocation>
        <location evidence="1">Nucleus</location>
    </subcellularLocation>
</comment>
<comment type="similarity">
    <text evidence="4">Belongs to the SWC5 family.</text>
</comment>
<evidence type="ECO:0000250" key="1"/>
<evidence type="ECO:0000255" key="2">
    <source>
        <dbReference type="PROSITE-ProRule" id="PRU00610"/>
    </source>
</evidence>
<evidence type="ECO:0000256" key="3">
    <source>
        <dbReference type="SAM" id="MobiDB-lite"/>
    </source>
</evidence>
<evidence type="ECO:0000305" key="4"/>
<name>SWC5_CANAL</name>
<organism>
    <name type="scientific">Candida albicans (strain SC5314 / ATCC MYA-2876)</name>
    <name type="common">Yeast</name>
    <dbReference type="NCBI Taxonomy" id="237561"/>
    <lineage>
        <taxon>Eukaryota</taxon>
        <taxon>Fungi</taxon>
        <taxon>Dikarya</taxon>
        <taxon>Ascomycota</taxon>
        <taxon>Saccharomycotina</taxon>
        <taxon>Pichiomycetes</taxon>
        <taxon>Debaryomycetaceae</taxon>
        <taxon>Candida/Lodderomyces clade</taxon>
        <taxon>Candida</taxon>
    </lineage>
</organism>
<dbReference type="EMBL" id="CP017628">
    <property type="protein sequence ID" value="AOW30321.1"/>
    <property type="molecule type" value="Genomic_DNA"/>
</dbReference>
<dbReference type="RefSeq" id="XP_718107.2">
    <property type="nucleotide sequence ID" value="XM_713014.2"/>
</dbReference>
<dbReference type="SMR" id="Q5A8H7"/>
<dbReference type="FunCoup" id="Q5A8H7">
    <property type="interactions" value="490"/>
</dbReference>
<dbReference type="STRING" id="237561.Q5A8H7"/>
<dbReference type="EnsemblFungi" id="C6_03950C_A-T">
    <property type="protein sequence ID" value="C6_03950C_A-T-p1"/>
    <property type="gene ID" value="C6_03950C_A"/>
</dbReference>
<dbReference type="GeneID" id="3640268"/>
<dbReference type="KEGG" id="cal:CAALFM_C603950CA"/>
<dbReference type="CGD" id="CAL0000185200">
    <property type="gene designation" value="orf19.13194"/>
</dbReference>
<dbReference type="VEuPathDB" id="FungiDB:C6_03950C_A"/>
<dbReference type="eggNOG" id="KOG4776">
    <property type="taxonomic scope" value="Eukaryota"/>
</dbReference>
<dbReference type="HOGENOM" id="CLU_062474_1_0_1"/>
<dbReference type="InParanoid" id="Q5A8H7"/>
<dbReference type="OMA" id="LDWAAYV"/>
<dbReference type="OrthoDB" id="445677at2759"/>
<dbReference type="PRO" id="PR:Q5A8H7"/>
<dbReference type="Proteomes" id="UP000000559">
    <property type="component" value="Chromosome 6"/>
</dbReference>
<dbReference type="GO" id="GO:0000812">
    <property type="term" value="C:Swr1 complex"/>
    <property type="evidence" value="ECO:0000318"/>
    <property type="project" value="GO_Central"/>
</dbReference>
<dbReference type="GO" id="GO:0006338">
    <property type="term" value="P:chromatin remodeling"/>
    <property type="evidence" value="ECO:0000318"/>
    <property type="project" value="GO_Central"/>
</dbReference>
<dbReference type="InterPro" id="IPR011421">
    <property type="entry name" value="BCNT-C"/>
</dbReference>
<dbReference type="InterPro" id="IPR027124">
    <property type="entry name" value="Swc5/CFDP1/2"/>
</dbReference>
<dbReference type="PANTHER" id="PTHR48407">
    <property type="entry name" value="CRANIOFACIAL DEVELOPMENT PROTEIN 1"/>
    <property type="match status" value="1"/>
</dbReference>
<dbReference type="PANTHER" id="PTHR48407:SF1">
    <property type="entry name" value="CRANIOFACIAL DEVELOPMENT PROTEIN 1"/>
    <property type="match status" value="1"/>
</dbReference>
<dbReference type="Pfam" id="PF07572">
    <property type="entry name" value="BCNT"/>
    <property type="match status" value="1"/>
</dbReference>
<dbReference type="PROSITE" id="PS51279">
    <property type="entry name" value="BCNT_C"/>
    <property type="match status" value="1"/>
</dbReference>
<protein>
    <recommendedName>
        <fullName>SWR1-complex protein 5</fullName>
    </recommendedName>
</protein>